<proteinExistence type="evidence at protein level"/>
<gene>
    <name type="primary">Cradd</name>
    <name type="synonym">Raidd</name>
</gene>
<name>CRADD_MOUSE</name>
<comment type="function">
    <text evidence="1">Adapter protein that associates with PIDD1 and the caspase CASP2 to form the PIDDosome, a complex that activates CASP2 and triggers apoptosis. Also recruits CASP2 to the TNFR-1 signaling complex through its interaction with RIPK1 and TRADD and may play a role in the tumor necrosis factor-mediated signaling pathway.</text>
</comment>
<comment type="subunit">
    <text evidence="1 4">Forms a complex named the PIDDosome with PIDD1 and CASP2 (PubMed:22279524). Interacts (via Death domain) with RIPK1 (via Death domain); the interaction is direct. Interacts with TRADD. Interacts with TNFRSF1A (By similarity).</text>
</comment>
<comment type="subcellular location">
    <subcellularLocation>
        <location evidence="4">Cytoplasm</location>
    </subcellularLocation>
    <subcellularLocation>
        <location evidence="4">Nucleus</location>
    </subcellularLocation>
</comment>
<comment type="domain">
    <text evidence="1">The Death domain mediates the interaction with PIDD1 and the formation of a complex composed of 5 PIDD1 and 7 CRADD proteins which in turn probably recruit 7 CASP2 to form the PIDDosome. The Death domain mediates a direct interaction with the Death domain of RIPK1.</text>
</comment>
<comment type="domain">
    <text evidence="1">The CARD domain mediates a direct interaction with CASP2.</text>
</comment>
<evidence type="ECO:0000250" key="1">
    <source>
        <dbReference type="UniProtKB" id="P78560"/>
    </source>
</evidence>
<evidence type="ECO:0000255" key="2">
    <source>
        <dbReference type="PROSITE-ProRule" id="PRU00046"/>
    </source>
</evidence>
<evidence type="ECO:0000255" key="3">
    <source>
        <dbReference type="PROSITE-ProRule" id="PRU00064"/>
    </source>
</evidence>
<evidence type="ECO:0000269" key="4">
    <source>
    </source>
</evidence>
<evidence type="ECO:0000305" key="5"/>
<sequence length="199" mass="22656">MEARDKQVLRSLRLELGAEVLVEGLVLQYLYQEGILTENHIQEIKAQTTGLRKTMLLLDILPSRGPKAFDTFLDSLQEFPWVREKLEKAREEVTAELPTGDWMAGIPSHILSSSPSDQQINQLAQRLGPEWEPVVLSLGLSQTDIYRCKANHPHNVHSQVVEAFVRWRQRFGKQATFLSLHKGLQAVEADPSLLQHMLE</sequence>
<protein>
    <recommendedName>
        <fullName>Death domain-containing protein CRADD</fullName>
    </recommendedName>
    <alternativeName>
        <fullName>Caspase and RIP adapter with death domain</fullName>
    </alternativeName>
    <alternativeName>
        <fullName>RIP-associated protein with a death domain</fullName>
    </alternativeName>
</protein>
<accession>O88843</accession>
<accession>Q9QUN0</accession>
<feature type="chain" id="PRO_0000079327" description="Death domain-containing protein CRADD">
    <location>
        <begin position="1"/>
        <end position="199"/>
    </location>
</feature>
<feature type="domain" description="CARD" evidence="2">
    <location>
        <begin position="1"/>
        <end position="92"/>
    </location>
</feature>
<feature type="domain" description="Death" evidence="3">
    <location>
        <begin position="116"/>
        <end position="188"/>
    </location>
</feature>
<feature type="mutagenesis site" description="Impairs the interaction with PIDD." evidence="4">
    <original>G</original>
    <variation>R</variation>
    <location>
        <position position="128"/>
    </location>
</feature>
<feature type="sequence conflict" description="In Ref. 1; AAC35882." evidence="5" ref="1">
    <original>Q</original>
    <variation>H</variation>
    <location>
        <position position="185"/>
    </location>
</feature>
<keyword id="KW-0053">Apoptosis</keyword>
<keyword id="KW-0963">Cytoplasm</keyword>
<keyword id="KW-0539">Nucleus</keyword>
<keyword id="KW-1185">Reference proteome</keyword>
<organism>
    <name type="scientific">Mus musculus</name>
    <name type="common">Mouse</name>
    <dbReference type="NCBI Taxonomy" id="10090"/>
    <lineage>
        <taxon>Eukaryota</taxon>
        <taxon>Metazoa</taxon>
        <taxon>Chordata</taxon>
        <taxon>Craniata</taxon>
        <taxon>Vertebrata</taxon>
        <taxon>Euteleostomi</taxon>
        <taxon>Mammalia</taxon>
        <taxon>Eutheria</taxon>
        <taxon>Euarchontoglires</taxon>
        <taxon>Glires</taxon>
        <taxon>Rodentia</taxon>
        <taxon>Myomorpha</taxon>
        <taxon>Muroidea</taxon>
        <taxon>Muridae</taxon>
        <taxon>Murinae</taxon>
        <taxon>Mus</taxon>
        <taxon>Mus</taxon>
    </lineage>
</organism>
<reference key="1">
    <citation type="submission" date="1997-08" db="EMBL/GenBank/DDBJ databases">
        <title>A mouse cell death adaptor molecule that contains a death domain and a CARD domain.</title>
        <authorList>
            <person name="Pan G."/>
        </authorList>
    </citation>
    <scope>NUCLEOTIDE SEQUENCE [MRNA]</scope>
</reference>
<reference key="2">
    <citation type="journal article" date="1998" name="Genomics">
        <title>A 500-kb YAC and BAC contig encompassing the high-growth deletion in mouse chromosome 10 and identification of the murine Raidd/Cradd gene in the candidate region.</title>
        <authorList>
            <person name="Horvat S."/>
            <person name="Medrano J.F."/>
        </authorList>
    </citation>
    <scope>NUCLEOTIDE SEQUENCE [MRNA]</scope>
</reference>
<reference key="3">
    <citation type="journal article" date="2004" name="Genome Res.">
        <title>The status, quality, and expansion of the NIH full-length cDNA project: the Mammalian Gene Collection (MGC).</title>
        <authorList>
            <consortium name="The MGC Project Team"/>
        </authorList>
    </citation>
    <scope>NUCLEOTIDE SEQUENCE [LARGE SCALE MRNA]</scope>
    <source>
        <strain>FVB/N</strain>
        <tissue>Mammary gland</tissue>
    </source>
</reference>
<reference key="4">
    <citation type="journal article" date="2010" name="Cell">
        <title>A tissue-specific atlas of mouse protein phosphorylation and expression.</title>
        <authorList>
            <person name="Huttlin E.L."/>
            <person name="Jedrychowski M.P."/>
            <person name="Elias J.E."/>
            <person name="Goswami T."/>
            <person name="Rad R."/>
            <person name="Beausoleil S.A."/>
            <person name="Villen J."/>
            <person name="Haas W."/>
            <person name="Sowa M.E."/>
            <person name="Gygi S.P."/>
        </authorList>
    </citation>
    <scope>IDENTIFICATION BY MASS SPECTROMETRY [LARGE SCALE ANALYSIS]</scope>
    <source>
        <tissue>Heart</tissue>
        <tissue>Kidney</tissue>
        <tissue>Liver</tissue>
        <tissue>Lung</tissue>
        <tissue>Pancreas</tissue>
        <tissue>Spleen</tissue>
    </source>
</reference>
<reference key="5">
    <citation type="journal article" date="2012" name="PLoS ONE">
        <title>Genetic mapping and exome sequencing identify variants associated with five novel diseases.</title>
        <authorList>
            <person name="Puffenberger E.G."/>
            <person name="Jinks R.N."/>
            <person name="Sougnez C."/>
            <person name="Cibulskis K."/>
            <person name="Willert R.A."/>
            <person name="Achilly N.P."/>
            <person name="Cassidy R.P."/>
            <person name="Fiorentini C.J."/>
            <person name="Heiken K.F."/>
            <person name="Lawrence J.J."/>
            <person name="Mahoney M.H."/>
            <person name="Miller C.J."/>
            <person name="Nair D.T."/>
            <person name="Politi K.A."/>
            <person name="Worcester K.N."/>
            <person name="Setton R.A."/>
            <person name="Dipiazza R."/>
            <person name="Sherman E.A."/>
            <person name="Eastman J.T."/>
            <person name="Francklyn C."/>
            <person name="Robey-Bond S."/>
            <person name="Rider N.L."/>
            <person name="Gabriel S."/>
            <person name="Morton D.H."/>
            <person name="Strauss K.A."/>
        </authorList>
    </citation>
    <scope>SUBCELLULAR LOCATION</scope>
    <scope>INTERACTION WITH PIDD</scope>
    <scope>MUTAGENESIS OF GLY-128</scope>
</reference>
<dbReference type="EMBL" id="AF017992">
    <property type="protein sequence ID" value="AAC35882.1"/>
    <property type="molecule type" value="mRNA"/>
</dbReference>
<dbReference type="EMBL" id="AJ224738">
    <property type="protein sequence ID" value="CAA12107.1"/>
    <property type="molecule type" value="mRNA"/>
</dbReference>
<dbReference type="EMBL" id="AJ224740">
    <property type="protein sequence ID" value="CAA12109.1"/>
    <property type="molecule type" value="mRNA"/>
</dbReference>
<dbReference type="EMBL" id="BC005608">
    <property type="protein sequence ID" value="AAH05608.1"/>
    <property type="molecule type" value="mRNA"/>
</dbReference>
<dbReference type="CCDS" id="CCDS24135.1"/>
<dbReference type="RefSeq" id="NP_001317067.1">
    <property type="nucleotide sequence ID" value="NM_001330138.1"/>
</dbReference>
<dbReference type="RefSeq" id="NP_001317070.1">
    <property type="nucleotide sequence ID" value="NM_001330141.1"/>
</dbReference>
<dbReference type="RefSeq" id="NP_001317104.1">
    <property type="nucleotide sequence ID" value="NM_001330175.1"/>
</dbReference>
<dbReference type="RefSeq" id="NP_034080.1">
    <property type="nucleotide sequence ID" value="NM_009950.3"/>
</dbReference>
<dbReference type="RefSeq" id="XP_006513243.1">
    <property type="nucleotide sequence ID" value="XM_006513180.2"/>
</dbReference>
<dbReference type="RefSeq" id="XP_006513244.1">
    <property type="nucleotide sequence ID" value="XM_006513181.4"/>
</dbReference>
<dbReference type="SMR" id="O88843"/>
<dbReference type="BioGRID" id="198870">
    <property type="interactions" value="4"/>
</dbReference>
<dbReference type="ComplexPortal" id="CPX-3963">
    <property type="entry name" value="Caspase-2 PIDDosome"/>
</dbReference>
<dbReference type="FunCoup" id="O88843">
    <property type="interactions" value="797"/>
</dbReference>
<dbReference type="STRING" id="10090.ENSMUSP00000050295"/>
<dbReference type="PhosphoSitePlus" id="O88843"/>
<dbReference type="PaxDb" id="10090-ENSMUSP00000050295"/>
<dbReference type="PeptideAtlas" id="O88843"/>
<dbReference type="ProteomicsDB" id="283953"/>
<dbReference type="Pumba" id="O88843"/>
<dbReference type="Antibodypedia" id="3943">
    <property type="antibodies" value="537 antibodies from 38 providers"/>
</dbReference>
<dbReference type="DNASU" id="12905"/>
<dbReference type="Ensembl" id="ENSMUST00000053594.7">
    <property type="protein sequence ID" value="ENSMUSP00000050295.6"/>
    <property type="gene ID" value="ENSMUSG00000045867.11"/>
</dbReference>
<dbReference type="Ensembl" id="ENSMUST00000217809.2">
    <property type="protein sequence ID" value="ENSMUSP00000151735.2"/>
    <property type="gene ID" value="ENSMUSG00000045867.11"/>
</dbReference>
<dbReference type="Ensembl" id="ENSMUST00000220279.2">
    <property type="protein sequence ID" value="ENSMUSP00000152022.2"/>
    <property type="gene ID" value="ENSMUSG00000045867.11"/>
</dbReference>
<dbReference type="GeneID" id="12905"/>
<dbReference type="KEGG" id="mmu:12905"/>
<dbReference type="UCSC" id="uc007gwa.1">
    <property type="organism name" value="mouse"/>
</dbReference>
<dbReference type="AGR" id="MGI:1336168"/>
<dbReference type="CTD" id="8738"/>
<dbReference type="MGI" id="MGI:1336168">
    <property type="gene designation" value="Cradd"/>
</dbReference>
<dbReference type="VEuPathDB" id="HostDB:ENSMUSG00000045867"/>
<dbReference type="eggNOG" id="ENOG502R26C">
    <property type="taxonomic scope" value="Eukaryota"/>
</dbReference>
<dbReference type="GeneTree" id="ENSGT00390000014448"/>
<dbReference type="HOGENOM" id="CLU_118159_0_0_1"/>
<dbReference type="InParanoid" id="O88843"/>
<dbReference type="OMA" id="RCRSDHS"/>
<dbReference type="OrthoDB" id="10031931at2759"/>
<dbReference type="PhylomeDB" id="O88843"/>
<dbReference type="TreeFam" id="TF333055"/>
<dbReference type="Reactome" id="R-MMU-6803207">
    <property type="pathway name" value="TP53 Regulates Transcription of Caspase Activators and Caspases"/>
</dbReference>
<dbReference type="BioGRID-ORCS" id="12905">
    <property type="hits" value="4 hits in 77 CRISPR screens"/>
</dbReference>
<dbReference type="ChiTaRS" id="Cradd">
    <property type="organism name" value="mouse"/>
</dbReference>
<dbReference type="PRO" id="PR:O88843"/>
<dbReference type="Proteomes" id="UP000000589">
    <property type="component" value="Chromosome 10"/>
</dbReference>
<dbReference type="RNAct" id="O88843">
    <property type="molecule type" value="protein"/>
</dbReference>
<dbReference type="Bgee" id="ENSMUSG00000045867">
    <property type="expression patterns" value="Expressed in granulocyte and 173 other cell types or tissues"/>
</dbReference>
<dbReference type="ExpressionAtlas" id="O88843">
    <property type="expression patterns" value="baseline and differential"/>
</dbReference>
<dbReference type="GO" id="GO:0005737">
    <property type="term" value="C:cytoplasm"/>
    <property type="evidence" value="ECO:0000314"/>
    <property type="project" value="UniProtKB"/>
</dbReference>
<dbReference type="GO" id="GO:1905369">
    <property type="term" value="C:endopeptidase complex"/>
    <property type="evidence" value="ECO:0000266"/>
    <property type="project" value="ComplexPortal"/>
</dbReference>
<dbReference type="GO" id="GO:0005730">
    <property type="term" value="C:nucleolus"/>
    <property type="evidence" value="ECO:0000303"/>
    <property type="project" value="ComplexPortal"/>
</dbReference>
<dbReference type="GO" id="GO:0005634">
    <property type="term" value="C:nucleus"/>
    <property type="evidence" value="ECO:0000314"/>
    <property type="project" value="UniProtKB"/>
</dbReference>
<dbReference type="GO" id="GO:0070513">
    <property type="term" value="F:death domain binding"/>
    <property type="evidence" value="ECO:0007669"/>
    <property type="project" value="Ensembl"/>
</dbReference>
<dbReference type="GO" id="GO:0002020">
    <property type="term" value="F:protease binding"/>
    <property type="evidence" value="ECO:0007669"/>
    <property type="project" value="Ensembl"/>
</dbReference>
<dbReference type="GO" id="GO:0030674">
    <property type="term" value="F:protein-macromolecule adaptor activity"/>
    <property type="evidence" value="ECO:0007669"/>
    <property type="project" value="Ensembl"/>
</dbReference>
<dbReference type="GO" id="GO:0097190">
    <property type="term" value="P:apoptotic signaling pathway"/>
    <property type="evidence" value="ECO:0000250"/>
    <property type="project" value="UniProtKB"/>
</dbReference>
<dbReference type="GO" id="GO:0071260">
    <property type="term" value="P:cellular response to mechanical stimulus"/>
    <property type="evidence" value="ECO:0007669"/>
    <property type="project" value="Ensembl"/>
</dbReference>
<dbReference type="GO" id="GO:0006974">
    <property type="term" value="P:DNA damage response"/>
    <property type="evidence" value="ECO:0000303"/>
    <property type="project" value="ComplexPortal"/>
</dbReference>
<dbReference type="GO" id="GO:0030330">
    <property type="term" value="P:DNA damage response, signal transduction by p53 class mediator"/>
    <property type="evidence" value="ECO:0007669"/>
    <property type="project" value="Ensembl"/>
</dbReference>
<dbReference type="GO" id="GO:0043065">
    <property type="term" value="P:positive regulation of apoptotic process"/>
    <property type="evidence" value="ECO:0000303"/>
    <property type="project" value="ComplexPortal"/>
</dbReference>
<dbReference type="GO" id="GO:2001235">
    <property type="term" value="P:positive regulation of apoptotic signaling pathway"/>
    <property type="evidence" value="ECO:0000316"/>
    <property type="project" value="MGI"/>
</dbReference>
<dbReference type="CDD" id="cd08327">
    <property type="entry name" value="CARD_RAIDD"/>
    <property type="match status" value="1"/>
</dbReference>
<dbReference type="CDD" id="cd08319">
    <property type="entry name" value="Death_RAIDD"/>
    <property type="match status" value="1"/>
</dbReference>
<dbReference type="FunFam" id="1.10.533.10:FF:000007">
    <property type="entry name" value="death domain-containing protein CRADD isoform X1"/>
    <property type="match status" value="1"/>
</dbReference>
<dbReference type="FunFam" id="1.10.533.10:FF:000058">
    <property type="entry name" value="death domain-containing protein CRADD isoform X1"/>
    <property type="match status" value="1"/>
</dbReference>
<dbReference type="Gene3D" id="1.10.533.10">
    <property type="entry name" value="Death Domain, Fas"/>
    <property type="match status" value="2"/>
</dbReference>
<dbReference type="InterPro" id="IPR001315">
    <property type="entry name" value="CARD"/>
</dbReference>
<dbReference type="InterPro" id="IPR042148">
    <property type="entry name" value="CARD_RAIDD"/>
</dbReference>
<dbReference type="InterPro" id="IPR037939">
    <property type="entry name" value="CRADD"/>
</dbReference>
<dbReference type="InterPro" id="IPR037926">
    <property type="entry name" value="CRADD_Death"/>
</dbReference>
<dbReference type="InterPro" id="IPR011029">
    <property type="entry name" value="DEATH-like_dom_sf"/>
</dbReference>
<dbReference type="InterPro" id="IPR000488">
    <property type="entry name" value="Death_dom"/>
</dbReference>
<dbReference type="PANTHER" id="PTHR15034">
    <property type="entry name" value="DEATH DOMAIN-CONTAINING PROTEIN CRADD"/>
    <property type="match status" value="1"/>
</dbReference>
<dbReference type="PANTHER" id="PTHR15034:SF5">
    <property type="entry name" value="DEATH DOMAIN-CONTAINING PROTEIN CRADD"/>
    <property type="match status" value="1"/>
</dbReference>
<dbReference type="Pfam" id="PF00619">
    <property type="entry name" value="CARD"/>
    <property type="match status" value="1"/>
</dbReference>
<dbReference type="Pfam" id="PF00531">
    <property type="entry name" value="Death"/>
    <property type="match status" value="1"/>
</dbReference>
<dbReference type="SMART" id="SM00114">
    <property type="entry name" value="CARD"/>
    <property type="match status" value="1"/>
</dbReference>
<dbReference type="SMART" id="SM00005">
    <property type="entry name" value="DEATH"/>
    <property type="match status" value="1"/>
</dbReference>
<dbReference type="SUPFAM" id="SSF47986">
    <property type="entry name" value="DEATH domain"/>
    <property type="match status" value="2"/>
</dbReference>
<dbReference type="PROSITE" id="PS50209">
    <property type="entry name" value="CARD"/>
    <property type="match status" value="1"/>
</dbReference>
<dbReference type="PROSITE" id="PS50017">
    <property type="entry name" value="DEATH_DOMAIN"/>
    <property type="match status" value="1"/>
</dbReference>